<proteinExistence type="inferred from homology"/>
<organism>
    <name type="scientific">Staphylococcus aureus (strain bovine RF122 / ET3-1)</name>
    <dbReference type="NCBI Taxonomy" id="273036"/>
    <lineage>
        <taxon>Bacteria</taxon>
        <taxon>Bacillati</taxon>
        <taxon>Bacillota</taxon>
        <taxon>Bacilli</taxon>
        <taxon>Bacillales</taxon>
        <taxon>Staphylococcaceae</taxon>
        <taxon>Staphylococcus</taxon>
    </lineage>
</organism>
<accession>Q2YZA7</accession>
<reference key="1">
    <citation type="journal article" date="2007" name="PLoS ONE">
        <title>Molecular correlates of host specialization in Staphylococcus aureus.</title>
        <authorList>
            <person name="Herron-Olson L."/>
            <person name="Fitzgerald J.R."/>
            <person name="Musser J.M."/>
            <person name="Kapur V."/>
        </authorList>
    </citation>
    <scope>NUCLEOTIDE SEQUENCE [LARGE SCALE GENOMIC DNA]</scope>
    <source>
        <strain>bovine RF122 / ET3-1</strain>
    </source>
</reference>
<name>Y2561_STAAB</name>
<evidence type="ECO:0000255" key="1">
    <source>
        <dbReference type="HAMAP-Rule" id="MF_01572"/>
    </source>
</evidence>
<keyword id="KW-1003">Cell membrane</keyword>
<keyword id="KW-0472">Membrane</keyword>
<keyword id="KW-0812">Transmembrane</keyword>
<keyword id="KW-1133">Transmembrane helix</keyword>
<comment type="subcellular location">
    <subcellularLocation>
        <location evidence="1">Cell membrane</location>
        <topology evidence="1">Multi-pass membrane protein</topology>
    </subcellularLocation>
</comment>
<comment type="similarity">
    <text evidence="1">Belongs to the UPF0397 family.</text>
</comment>
<gene>
    <name type="ordered locus">SAB2561c</name>
</gene>
<sequence>MKKQDISVKTVVAIGIGAAVFVILGRFVVIPTGFPNTNIETSYAFLALISAIFGPFAGLMTGLVGHAIKDFTTYGSAWWSWVICSGIIGCLYGWIGLKLNLSSGRFSRKSMIYFNIGQIIANIICWALIAPTLDILIYNEPANKVYTQGVISAVLNIISVGIIGTILLKAYASSQIKKGSLRKK</sequence>
<dbReference type="EMBL" id="AJ938182">
    <property type="protein sequence ID" value="CAI82249.1"/>
    <property type="molecule type" value="Genomic_DNA"/>
</dbReference>
<dbReference type="RefSeq" id="WP_000743715.1">
    <property type="nucleotide sequence ID" value="NC_007622.1"/>
</dbReference>
<dbReference type="KEGG" id="sab:SAB2561c"/>
<dbReference type="HOGENOM" id="CLU_120023_0_0_9"/>
<dbReference type="GO" id="GO:0005886">
    <property type="term" value="C:plasma membrane"/>
    <property type="evidence" value="ECO:0007669"/>
    <property type="project" value="UniProtKB-SubCell"/>
</dbReference>
<dbReference type="Gene3D" id="1.10.1760.20">
    <property type="match status" value="1"/>
</dbReference>
<dbReference type="HAMAP" id="MF_01572">
    <property type="entry name" value="UPF0397"/>
    <property type="match status" value="1"/>
</dbReference>
<dbReference type="InterPro" id="IPR009825">
    <property type="entry name" value="ECF_substrate-spec-like"/>
</dbReference>
<dbReference type="InterPro" id="IPR022914">
    <property type="entry name" value="UPF0397"/>
</dbReference>
<dbReference type="NCBIfam" id="NF010182">
    <property type="entry name" value="PRK13661.1"/>
    <property type="match status" value="1"/>
</dbReference>
<dbReference type="PANTHER" id="PTHR37815">
    <property type="entry name" value="UPF0397 PROTEIN BC_2624-RELATED"/>
    <property type="match status" value="1"/>
</dbReference>
<dbReference type="PANTHER" id="PTHR37815:SF3">
    <property type="entry name" value="UPF0397 PROTEIN SPR0429"/>
    <property type="match status" value="1"/>
</dbReference>
<dbReference type="Pfam" id="PF07155">
    <property type="entry name" value="ECF-ribofla_trS"/>
    <property type="match status" value="1"/>
</dbReference>
<protein>
    <recommendedName>
        <fullName evidence="1">UPF0397 protein SAB2561c</fullName>
    </recommendedName>
</protein>
<feature type="chain" id="PRO_0000260803" description="UPF0397 protein SAB2561c">
    <location>
        <begin position="1"/>
        <end position="184"/>
    </location>
</feature>
<feature type="transmembrane region" description="Helical" evidence="1">
    <location>
        <begin position="11"/>
        <end position="31"/>
    </location>
</feature>
<feature type="transmembrane region" description="Helical" evidence="1">
    <location>
        <begin position="44"/>
        <end position="64"/>
    </location>
</feature>
<feature type="transmembrane region" description="Helical" evidence="1">
    <location>
        <begin position="77"/>
        <end position="97"/>
    </location>
</feature>
<feature type="transmembrane region" description="Helical" evidence="1">
    <location>
        <begin position="111"/>
        <end position="131"/>
    </location>
</feature>
<feature type="transmembrane region" description="Helical" evidence="1">
    <location>
        <begin position="148"/>
        <end position="168"/>
    </location>
</feature>